<comment type="function">
    <text evidence="3">Plays a role in transport between endoplasmic reticulum and Golgi. In pancreatic beta cells, required to transport proinsulin from endoplasmic reticulum into the Golgi.</text>
</comment>
<comment type="subunit">
    <text evidence="3">Interacts with the COPII coat components Sec23 (SEC23A and/or SEC23B) and Sec24 (SEC24A and/or SEC24B) (By similarity). Interacts with YIF1A (By similarity). May interact with RAB1A (By similarity). Interacts with YIPF3 and YIPF4 (By similarity).</text>
</comment>
<comment type="subcellular location">
    <subcellularLocation>
        <location evidence="4">Endoplasmic reticulum membrane</location>
        <topology evidence="3">Multi-pass membrane protein</topology>
    </subcellularLocation>
    <subcellularLocation>
        <location evidence="3">Golgi apparatus</location>
        <location evidence="3">cis-Golgi network membrane</location>
        <topology evidence="3">Multi-pass membrane protein</topology>
    </subcellularLocation>
    <subcellularLocation>
        <location evidence="2">Cytoplasmic vesicle</location>
        <location evidence="2">COPII-coated vesicle</location>
    </subcellularLocation>
    <text evidence="2 4">Enriched at the endoplasmic reticulum exit sites (By similarity). Incorporated into COPII-coated vesicles (By similarity).</text>
</comment>
<comment type="similarity">
    <text evidence="6">Belongs to the YIP1 family.</text>
</comment>
<sequence>MSGFENLNTDFYQTSYSIDDQSQQSYDYGGSGGPYSKQYAGYDYSQQGRFVPPDMMQPQQPYTGQIYQPTQAYTPASPQPFYGNNFEDEPPLLEELGINFDHIWQKTLTVLHPLKVADGSIMNETDLAGPMVFCLAFGATLLLAGKIQFGYVYGISAIGCLGMFCLLNLMSMTGVSFGCVASVLGYCLLPMILLSSFAVIFSLQGMVGIILTAGIIGWCSFSASKIFISALAMEGQQLLVAYPCALLYGVFALISVF</sequence>
<dbReference type="EMBL" id="CR860365">
    <property type="protein sequence ID" value="CAH92495.1"/>
    <property type="molecule type" value="mRNA"/>
</dbReference>
<dbReference type="RefSeq" id="NP_001127558.1">
    <property type="nucleotide sequence ID" value="NM_001134086.1"/>
</dbReference>
<dbReference type="FunCoup" id="Q5R6W5">
    <property type="interactions" value="4330"/>
</dbReference>
<dbReference type="STRING" id="9601.ENSPPYP00000017789"/>
<dbReference type="Ensembl" id="ENSPPYT00000050020.1">
    <property type="protein sequence ID" value="ENSPPYP00000040976.1"/>
    <property type="gene ID" value="ENSPPYG00000038760.1"/>
</dbReference>
<dbReference type="GeneID" id="100174636"/>
<dbReference type="KEGG" id="pon:100174636"/>
<dbReference type="CTD" id="81555"/>
<dbReference type="eggNOG" id="KOG3103">
    <property type="taxonomic scope" value="Eukaryota"/>
</dbReference>
<dbReference type="GeneTree" id="ENSGT00940000153168"/>
<dbReference type="HOGENOM" id="CLU_074741_2_0_1"/>
<dbReference type="InParanoid" id="Q5R6W5"/>
<dbReference type="OMA" id="HIRAKSM"/>
<dbReference type="OrthoDB" id="440385at2759"/>
<dbReference type="TreeFam" id="TF313100"/>
<dbReference type="Proteomes" id="UP000001595">
    <property type="component" value="Chromosome 5"/>
</dbReference>
<dbReference type="GO" id="GO:0030134">
    <property type="term" value="C:COPII-coated ER to Golgi transport vesicle"/>
    <property type="evidence" value="ECO:0007669"/>
    <property type="project" value="UniProtKB-SubCell"/>
</dbReference>
<dbReference type="GO" id="GO:0070971">
    <property type="term" value="C:endoplasmic reticulum exit site"/>
    <property type="evidence" value="ECO:0007669"/>
    <property type="project" value="Ensembl"/>
</dbReference>
<dbReference type="GO" id="GO:0005789">
    <property type="term" value="C:endoplasmic reticulum membrane"/>
    <property type="evidence" value="ECO:0007669"/>
    <property type="project" value="UniProtKB-SubCell"/>
</dbReference>
<dbReference type="GO" id="GO:0005654">
    <property type="term" value="C:nucleoplasm"/>
    <property type="evidence" value="ECO:0007669"/>
    <property type="project" value="Ensembl"/>
</dbReference>
<dbReference type="GO" id="GO:0005802">
    <property type="term" value="C:trans-Golgi network"/>
    <property type="evidence" value="ECO:0007669"/>
    <property type="project" value="TreeGrafter"/>
</dbReference>
<dbReference type="GO" id="GO:0006888">
    <property type="term" value="P:endoplasmic reticulum to Golgi vesicle-mediated transport"/>
    <property type="evidence" value="ECO:0007669"/>
    <property type="project" value="InterPro"/>
</dbReference>
<dbReference type="GO" id="GO:0030070">
    <property type="term" value="P:insulin processing"/>
    <property type="evidence" value="ECO:0000250"/>
    <property type="project" value="UniProtKB"/>
</dbReference>
<dbReference type="GO" id="GO:0015031">
    <property type="term" value="P:protein transport"/>
    <property type="evidence" value="ECO:0007669"/>
    <property type="project" value="UniProtKB-KW"/>
</dbReference>
<dbReference type="GO" id="GO:0060628">
    <property type="term" value="P:regulation of ER to Golgi vesicle-mediated transport"/>
    <property type="evidence" value="ECO:0000250"/>
    <property type="project" value="UniProtKB"/>
</dbReference>
<dbReference type="GO" id="GO:0048280">
    <property type="term" value="P:vesicle fusion with Golgi apparatus"/>
    <property type="evidence" value="ECO:0007669"/>
    <property type="project" value="TreeGrafter"/>
</dbReference>
<dbReference type="InterPro" id="IPR045231">
    <property type="entry name" value="Yip1/4-like"/>
</dbReference>
<dbReference type="InterPro" id="IPR006977">
    <property type="entry name" value="Yip1_dom"/>
</dbReference>
<dbReference type="PANTHER" id="PTHR21236">
    <property type="entry name" value="GOLGI MEMBRANE PROTEIN YIP1"/>
    <property type="match status" value="1"/>
</dbReference>
<dbReference type="PANTHER" id="PTHR21236:SF6">
    <property type="entry name" value="PROTEIN YIPF5"/>
    <property type="match status" value="1"/>
</dbReference>
<dbReference type="Pfam" id="PF04893">
    <property type="entry name" value="Yip1"/>
    <property type="match status" value="1"/>
</dbReference>
<feature type="chain" id="PRO_0000234331" description="Protein YIPF5">
    <location>
        <begin position="1"/>
        <end position="257"/>
    </location>
</feature>
<feature type="topological domain" description="Cytoplasmic" evidence="3">
    <location>
        <begin position="1"/>
        <end position="124"/>
    </location>
</feature>
<feature type="transmembrane region" description="Helical" evidence="5">
    <location>
        <begin position="125"/>
        <end position="145"/>
    </location>
</feature>
<feature type="topological domain" description="Lumenal" evidence="6">
    <location>
        <position position="146"/>
    </location>
</feature>
<feature type="transmembrane region" description="Helical" evidence="5">
    <location>
        <begin position="147"/>
        <end position="167"/>
    </location>
</feature>
<feature type="topological domain" description="Cytoplasmic" evidence="6">
    <location>
        <begin position="168"/>
        <end position="173"/>
    </location>
</feature>
<feature type="transmembrane region" description="Helical" evidence="5">
    <location>
        <begin position="174"/>
        <end position="194"/>
    </location>
</feature>
<feature type="topological domain" description="Lumenal" evidence="6">
    <location>
        <begin position="195"/>
        <end position="196"/>
    </location>
</feature>
<feature type="transmembrane region" description="Helical" evidence="5">
    <location>
        <begin position="197"/>
        <end position="217"/>
    </location>
</feature>
<feature type="topological domain" description="Cytoplasmic" evidence="6">
    <location>
        <begin position="218"/>
        <end position="236"/>
    </location>
</feature>
<feature type="transmembrane region" description="Helical" evidence="5">
    <location>
        <begin position="237"/>
        <end position="257"/>
    </location>
</feature>
<feature type="region of interest" description="Interaction with Sec23" evidence="1">
    <location>
        <begin position="75"/>
        <end position="106"/>
    </location>
</feature>
<proteinExistence type="evidence at transcript level"/>
<name>YIPF5_PONAB</name>
<organism>
    <name type="scientific">Pongo abelii</name>
    <name type="common">Sumatran orangutan</name>
    <name type="synonym">Pongo pygmaeus abelii</name>
    <dbReference type="NCBI Taxonomy" id="9601"/>
    <lineage>
        <taxon>Eukaryota</taxon>
        <taxon>Metazoa</taxon>
        <taxon>Chordata</taxon>
        <taxon>Craniata</taxon>
        <taxon>Vertebrata</taxon>
        <taxon>Euteleostomi</taxon>
        <taxon>Mammalia</taxon>
        <taxon>Eutheria</taxon>
        <taxon>Euarchontoglires</taxon>
        <taxon>Primates</taxon>
        <taxon>Haplorrhini</taxon>
        <taxon>Catarrhini</taxon>
        <taxon>Hominidae</taxon>
        <taxon>Pongo</taxon>
    </lineage>
</organism>
<protein>
    <recommendedName>
        <fullName>Protein YIPF5</fullName>
    </recommendedName>
    <alternativeName>
        <fullName>YIP1 family member 5</fullName>
    </alternativeName>
</protein>
<reference key="1">
    <citation type="submission" date="2004-11" db="EMBL/GenBank/DDBJ databases">
        <authorList>
            <consortium name="The German cDNA consortium"/>
        </authorList>
    </citation>
    <scope>NUCLEOTIDE SEQUENCE [LARGE SCALE MRNA]</scope>
    <source>
        <tissue>Brain cortex</tissue>
    </source>
</reference>
<gene>
    <name type="primary">YIPF5</name>
</gene>
<accession>Q5R6W5</accession>
<keyword id="KW-0968">Cytoplasmic vesicle</keyword>
<keyword id="KW-0256">Endoplasmic reticulum</keyword>
<keyword id="KW-0931">ER-Golgi transport</keyword>
<keyword id="KW-0333">Golgi apparatus</keyword>
<keyword id="KW-0472">Membrane</keyword>
<keyword id="KW-0653">Protein transport</keyword>
<keyword id="KW-1185">Reference proteome</keyword>
<keyword id="KW-0812">Transmembrane</keyword>
<keyword id="KW-1133">Transmembrane helix</keyword>
<keyword id="KW-0813">Transport</keyword>
<evidence type="ECO:0000250" key="1"/>
<evidence type="ECO:0000250" key="2">
    <source>
        <dbReference type="UniProtKB" id="Q5XID0"/>
    </source>
</evidence>
<evidence type="ECO:0000250" key="3">
    <source>
        <dbReference type="UniProtKB" id="Q969M3"/>
    </source>
</evidence>
<evidence type="ECO:0000250" key="4">
    <source>
        <dbReference type="UniProtKB" id="Q9EQQ2"/>
    </source>
</evidence>
<evidence type="ECO:0000255" key="5"/>
<evidence type="ECO:0000305" key="6"/>